<protein>
    <recommendedName>
        <fullName evidence="1">Dihydroxy-acid dehydratase</fullName>
        <shortName evidence="1">DAD</shortName>
        <ecNumber evidence="1">4.2.1.9</ecNumber>
    </recommendedName>
</protein>
<dbReference type="EC" id="4.2.1.9" evidence="1"/>
<dbReference type="EMBL" id="AL513382">
    <property type="protein sequence ID" value="CAD09413.1"/>
    <property type="molecule type" value="Genomic_DNA"/>
</dbReference>
<dbReference type="EMBL" id="AE014613">
    <property type="protein sequence ID" value="AAO70918.1"/>
    <property type="molecule type" value="Genomic_DNA"/>
</dbReference>
<dbReference type="RefSeq" id="NP_457844.1">
    <property type="nucleotide sequence ID" value="NC_003198.1"/>
</dbReference>
<dbReference type="RefSeq" id="WP_001127449.1">
    <property type="nucleotide sequence ID" value="NZ_WSUR01000032.1"/>
</dbReference>
<dbReference type="SMR" id="Q8Z377"/>
<dbReference type="STRING" id="220341.gene:17587508"/>
<dbReference type="KEGG" id="stt:t3394"/>
<dbReference type="KEGG" id="sty:STY3653"/>
<dbReference type="PATRIC" id="fig|220341.7.peg.3722"/>
<dbReference type="eggNOG" id="COG0129">
    <property type="taxonomic scope" value="Bacteria"/>
</dbReference>
<dbReference type="HOGENOM" id="CLU_014271_4_2_6"/>
<dbReference type="OMA" id="STQGRNM"/>
<dbReference type="OrthoDB" id="9807077at2"/>
<dbReference type="UniPathway" id="UPA00047">
    <property type="reaction ID" value="UER00057"/>
</dbReference>
<dbReference type="UniPathway" id="UPA00049">
    <property type="reaction ID" value="UER00061"/>
</dbReference>
<dbReference type="Proteomes" id="UP000000541">
    <property type="component" value="Chromosome"/>
</dbReference>
<dbReference type="Proteomes" id="UP000002670">
    <property type="component" value="Chromosome"/>
</dbReference>
<dbReference type="GO" id="GO:0005829">
    <property type="term" value="C:cytosol"/>
    <property type="evidence" value="ECO:0007669"/>
    <property type="project" value="TreeGrafter"/>
</dbReference>
<dbReference type="GO" id="GO:0051537">
    <property type="term" value="F:2 iron, 2 sulfur cluster binding"/>
    <property type="evidence" value="ECO:0007669"/>
    <property type="project" value="UniProtKB-UniRule"/>
</dbReference>
<dbReference type="GO" id="GO:0004160">
    <property type="term" value="F:dihydroxy-acid dehydratase activity"/>
    <property type="evidence" value="ECO:0007669"/>
    <property type="project" value="UniProtKB-UniRule"/>
</dbReference>
<dbReference type="GO" id="GO:0000287">
    <property type="term" value="F:magnesium ion binding"/>
    <property type="evidence" value="ECO:0007669"/>
    <property type="project" value="UniProtKB-UniRule"/>
</dbReference>
<dbReference type="GO" id="GO:0009097">
    <property type="term" value="P:isoleucine biosynthetic process"/>
    <property type="evidence" value="ECO:0007669"/>
    <property type="project" value="UniProtKB-UniRule"/>
</dbReference>
<dbReference type="GO" id="GO:0009099">
    <property type="term" value="P:L-valine biosynthetic process"/>
    <property type="evidence" value="ECO:0007669"/>
    <property type="project" value="UniProtKB-UniRule"/>
</dbReference>
<dbReference type="FunFam" id="3.50.30.80:FF:000001">
    <property type="entry name" value="Dihydroxy-acid dehydratase"/>
    <property type="match status" value="1"/>
</dbReference>
<dbReference type="Gene3D" id="3.50.30.80">
    <property type="entry name" value="IlvD/EDD C-terminal domain-like"/>
    <property type="match status" value="1"/>
</dbReference>
<dbReference type="HAMAP" id="MF_00012">
    <property type="entry name" value="IlvD"/>
    <property type="match status" value="1"/>
</dbReference>
<dbReference type="InterPro" id="IPR042096">
    <property type="entry name" value="Dihydro-acid_dehy_C"/>
</dbReference>
<dbReference type="InterPro" id="IPR004404">
    <property type="entry name" value="DihydroxyA_deHydtase"/>
</dbReference>
<dbReference type="InterPro" id="IPR020558">
    <property type="entry name" value="DiOHA_6PGluconate_deHydtase_CS"/>
</dbReference>
<dbReference type="InterPro" id="IPR056740">
    <property type="entry name" value="ILV_EDD_C"/>
</dbReference>
<dbReference type="InterPro" id="IPR000581">
    <property type="entry name" value="ILV_EDD_N"/>
</dbReference>
<dbReference type="InterPro" id="IPR037237">
    <property type="entry name" value="IlvD/EDD_N"/>
</dbReference>
<dbReference type="NCBIfam" id="TIGR00110">
    <property type="entry name" value="ilvD"/>
    <property type="match status" value="1"/>
</dbReference>
<dbReference type="NCBIfam" id="NF009103">
    <property type="entry name" value="PRK12448.1"/>
    <property type="match status" value="1"/>
</dbReference>
<dbReference type="PANTHER" id="PTHR43661">
    <property type="entry name" value="D-XYLONATE DEHYDRATASE"/>
    <property type="match status" value="1"/>
</dbReference>
<dbReference type="PANTHER" id="PTHR43661:SF3">
    <property type="entry name" value="D-XYLONATE DEHYDRATASE YAGF-RELATED"/>
    <property type="match status" value="1"/>
</dbReference>
<dbReference type="Pfam" id="PF24877">
    <property type="entry name" value="ILV_EDD_C"/>
    <property type="match status" value="1"/>
</dbReference>
<dbReference type="Pfam" id="PF00920">
    <property type="entry name" value="ILVD_EDD_N"/>
    <property type="match status" value="1"/>
</dbReference>
<dbReference type="SUPFAM" id="SSF143975">
    <property type="entry name" value="IlvD/EDD N-terminal domain-like"/>
    <property type="match status" value="1"/>
</dbReference>
<dbReference type="SUPFAM" id="SSF52016">
    <property type="entry name" value="LeuD/IlvD-like"/>
    <property type="match status" value="1"/>
</dbReference>
<dbReference type="PROSITE" id="PS00886">
    <property type="entry name" value="ILVD_EDD_1"/>
    <property type="match status" value="1"/>
</dbReference>
<dbReference type="PROSITE" id="PS00887">
    <property type="entry name" value="ILVD_EDD_2"/>
    <property type="match status" value="1"/>
</dbReference>
<feature type="chain" id="PRO_0000103501" description="Dihydroxy-acid dehydratase">
    <location>
        <begin position="1"/>
        <end position="616"/>
    </location>
</feature>
<feature type="active site" description="Proton acceptor" evidence="1">
    <location>
        <position position="517"/>
    </location>
</feature>
<feature type="binding site" evidence="1">
    <location>
        <position position="81"/>
    </location>
    <ligand>
        <name>Mg(2+)</name>
        <dbReference type="ChEBI" id="CHEBI:18420"/>
    </ligand>
</feature>
<feature type="binding site" evidence="1">
    <location>
        <position position="122"/>
    </location>
    <ligand>
        <name>[2Fe-2S] cluster</name>
        <dbReference type="ChEBI" id="CHEBI:190135"/>
    </ligand>
</feature>
<feature type="binding site" evidence="1">
    <location>
        <position position="123"/>
    </location>
    <ligand>
        <name>Mg(2+)</name>
        <dbReference type="ChEBI" id="CHEBI:18420"/>
    </ligand>
</feature>
<feature type="binding site" description="via carbamate group" evidence="1">
    <location>
        <position position="124"/>
    </location>
    <ligand>
        <name>Mg(2+)</name>
        <dbReference type="ChEBI" id="CHEBI:18420"/>
    </ligand>
</feature>
<feature type="binding site" evidence="1">
    <location>
        <position position="195"/>
    </location>
    <ligand>
        <name>[2Fe-2S] cluster</name>
        <dbReference type="ChEBI" id="CHEBI:190135"/>
    </ligand>
</feature>
<feature type="binding site" evidence="1">
    <location>
        <position position="491"/>
    </location>
    <ligand>
        <name>Mg(2+)</name>
        <dbReference type="ChEBI" id="CHEBI:18420"/>
    </ligand>
</feature>
<feature type="modified residue" description="N6-carboxylysine" evidence="1">
    <location>
        <position position="124"/>
    </location>
</feature>
<sequence>MPKYRSATTTHGRNMAGARALWRATGMTDSDFGKPIITVVNSFTQFVPGHVHLRDLGKLVAEQIEASGGVAKEFNTIAVDDGIAMGHGGMLYSLPSRELIADSVEYMVNAHCADAMVCISNCDKITPGMLMASLRLNIPVIFVSGGPMEAGKTKLSDQIIKLDLVDAMIQGADPKVSDDQSNQVERSACPTCGSCSGMFTANSMNCLIEALGLSQPGNGSLLATHADRKQLFLNAGKRIVELTKRYYEQDDESALPRNIANKAAFENAMTLDIAMGGSTNTVLHLLAAAQEAEIDFTMSDIDKLSRKVPQLCKVAPSTQKYHMEDVHRAGGVLGILGELDRAGLLNRNVKNVLGLTLPQTLEQYDITVTQDEAVKKMFRAGPAGIRTTQAFSQDCRWDSLDDDRAAGCIRSLEYAYSKDGGLAVLYGNFAENGCIVKTAGVDDSILKFTGPVKVYESQDDAVEAILGGKVVEGDVVVIRYEGPKGGPGMQEMLYPTSFLKSMGLGKACALITDGRFSGGTSGLSIGHVSPEAASGGTIALIEDGDTIAIDIPNRSIQLQLSEAEIAARREAQEARGDKAWTPKNRQRQVSFALRAYASLATSADKGAVRDKSKLGG</sequence>
<name>ILVD_SALTI</name>
<proteinExistence type="inferred from homology"/>
<gene>
    <name evidence="1" type="primary">ilvD</name>
    <name type="ordered locus">STY3653</name>
    <name type="ordered locus">t3394</name>
</gene>
<accession>Q8Z377</accession>
<reference key="1">
    <citation type="journal article" date="2001" name="Nature">
        <title>Complete genome sequence of a multiple drug resistant Salmonella enterica serovar Typhi CT18.</title>
        <authorList>
            <person name="Parkhill J."/>
            <person name="Dougan G."/>
            <person name="James K.D."/>
            <person name="Thomson N.R."/>
            <person name="Pickard D."/>
            <person name="Wain J."/>
            <person name="Churcher C.M."/>
            <person name="Mungall K.L."/>
            <person name="Bentley S.D."/>
            <person name="Holden M.T.G."/>
            <person name="Sebaihia M."/>
            <person name="Baker S."/>
            <person name="Basham D."/>
            <person name="Brooks K."/>
            <person name="Chillingworth T."/>
            <person name="Connerton P."/>
            <person name="Cronin A."/>
            <person name="Davis P."/>
            <person name="Davies R.M."/>
            <person name="Dowd L."/>
            <person name="White N."/>
            <person name="Farrar J."/>
            <person name="Feltwell T."/>
            <person name="Hamlin N."/>
            <person name="Haque A."/>
            <person name="Hien T.T."/>
            <person name="Holroyd S."/>
            <person name="Jagels K."/>
            <person name="Krogh A."/>
            <person name="Larsen T.S."/>
            <person name="Leather S."/>
            <person name="Moule S."/>
            <person name="O'Gaora P."/>
            <person name="Parry C."/>
            <person name="Quail M.A."/>
            <person name="Rutherford K.M."/>
            <person name="Simmonds M."/>
            <person name="Skelton J."/>
            <person name="Stevens K."/>
            <person name="Whitehead S."/>
            <person name="Barrell B.G."/>
        </authorList>
    </citation>
    <scope>NUCLEOTIDE SEQUENCE [LARGE SCALE GENOMIC DNA]</scope>
    <source>
        <strain>CT18</strain>
    </source>
</reference>
<reference key="2">
    <citation type="journal article" date="2003" name="J. Bacteriol.">
        <title>Comparative genomics of Salmonella enterica serovar Typhi strains Ty2 and CT18.</title>
        <authorList>
            <person name="Deng W."/>
            <person name="Liou S.-R."/>
            <person name="Plunkett G. III"/>
            <person name="Mayhew G.F."/>
            <person name="Rose D.J."/>
            <person name="Burland V."/>
            <person name="Kodoyianni V."/>
            <person name="Schwartz D.C."/>
            <person name="Blattner F.R."/>
        </authorList>
    </citation>
    <scope>NUCLEOTIDE SEQUENCE [LARGE SCALE GENOMIC DNA]</scope>
    <source>
        <strain>ATCC 700931 / Ty2</strain>
    </source>
</reference>
<organism>
    <name type="scientific">Salmonella typhi</name>
    <dbReference type="NCBI Taxonomy" id="90370"/>
    <lineage>
        <taxon>Bacteria</taxon>
        <taxon>Pseudomonadati</taxon>
        <taxon>Pseudomonadota</taxon>
        <taxon>Gammaproteobacteria</taxon>
        <taxon>Enterobacterales</taxon>
        <taxon>Enterobacteriaceae</taxon>
        <taxon>Salmonella</taxon>
    </lineage>
</organism>
<evidence type="ECO:0000255" key="1">
    <source>
        <dbReference type="HAMAP-Rule" id="MF_00012"/>
    </source>
</evidence>
<keyword id="KW-0001">2Fe-2S</keyword>
<keyword id="KW-0028">Amino-acid biosynthesis</keyword>
<keyword id="KW-0100">Branched-chain amino acid biosynthesis</keyword>
<keyword id="KW-0408">Iron</keyword>
<keyword id="KW-0411">Iron-sulfur</keyword>
<keyword id="KW-0456">Lyase</keyword>
<keyword id="KW-0460">Magnesium</keyword>
<keyword id="KW-0479">Metal-binding</keyword>
<comment type="function">
    <text evidence="1">Functions in the biosynthesis of branched-chain amino acids. Catalyzes the dehydration of (2R,3R)-2,3-dihydroxy-3-methylpentanoate (2,3-dihydroxy-3-methylvalerate) into 2-oxo-3-methylpentanoate (2-oxo-3-methylvalerate) and of (2R)-2,3-dihydroxy-3-methylbutanoate (2,3-dihydroxyisovalerate) into 2-oxo-3-methylbutanoate (2-oxoisovalerate), the penultimate precursor to L-isoleucine and L-valine, respectively.</text>
</comment>
<comment type="catalytic activity">
    <reaction evidence="1">
        <text>(2R)-2,3-dihydroxy-3-methylbutanoate = 3-methyl-2-oxobutanoate + H2O</text>
        <dbReference type="Rhea" id="RHEA:24809"/>
        <dbReference type="ChEBI" id="CHEBI:11851"/>
        <dbReference type="ChEBI" id="CHEBI:15377"/>
        <dbReference type="ChEBI" id="CHEBI:49072"/>
        <dbReference type="EC" id="4.2.1.9"/>
    </reaction>
    <physiologicalReaction direction="left-to-right" evidence="1">
        <dbReference type="Rhea" id="RHEA:24810"/>
    </physiologicalReaction>
</comment>
<comment type="catalytic activity">
    <reaction evidence="1">
        <text>(2R,3R)-2,3-dihydroxy-3-methylpentanoate = (S)-3-methyl-2-oxopentanoate + H2O</text>
        <dbReference type="Rhea" id="RHEA:27694"/>
        <dbReference type="ChEBI" id="CHEBI:15377"/>
        <dbReference type="ChEBI" id="CHEBI:35146"/>
        <dbReference type="ChEBI" id="CHEBI:49258"/>
        <dbReference type="EC" id="4.2.1.9"/>
    </reaction>
    <physiologicalReaction direction="left-to-right" evidence="1">
        <dbReference type="Rhea" id="RHEA:27695"/>
    </physiologicalReaction>
</comment>
<comment type="cofactor">
    <cofactor evidence="1">
        <name>[2Fe-2S] cluster</name>
        <dbReference type="ChEBI" id="CHEBI:190135"/>
    </cofactor>
    <text evidence="1">Binds 1 [2Fe-2S] cluster per subunit. This cluster acts as a Lewis acid cofactor.</text>
</comment>
<comment type="cofactor">
    <cofactor evidence="1">
        <name>Mg(2+)</name>
        <dbReference type="ChEBI" id="CHEBI:18420"/>
    </cofactor>
</comment>
<comment type="pathway">
    <text evidence="1">Amino-acid biosynthesis; L-isoleucine biosynthesis; L-isoleucine from 2-oxobutanoate: step 3/4.</text>
</comment>
<comment type="pathway">
    <text evidence="1">Amino-acid biosynthesis; L-valine biosynthesis; L-valine from pyruvate: step 3/4.</text>
</comment>
<comment type="subunit">
    <text evidence="1">Homodimer.</text>
</comment>
<comment type="similarity">
    <text evidence="1">Belongs to the IlvD/Edd family.</text>
</comment>